<proteinExistence type="inferred from homology"/>
<dbReference type="EC" id="3.1.1.96" evidence="1"/>
<dbReference type="EMBL" id="CP000951">
    <property type="protein sequence ID" value="ACA98222.1"/>
    <property type="molecule type" value="Genomic_DNA"/>
</dbReference>
<dbReference type="RefSeq" id="WP_012305846.1">
    <property type="nucleotide sequence ID" value="NZ_JAHHPU010000004.1"/>
</dbReference>
<dbReference type="SMR" id="B1XM75"/>
<dbReference type="STRING" id="32049.SYNPCC7002_A0209"/>
<dbReference type="KEGG" id="syp:SYNPCC7002_A0209"/>
<dbReference type="eggNOG" id="COG1490">
    <property type="taxonomic scope" value="Bacteria"/>
</dbReference>
<dbReference type="HOGENOM" id="CLU_076901_1_0_3"/>
<dbReference type="Proteomes" id="UP000001688">
    <property type="component" value="Chromosome"/>
</dbReference>
<dbReference type="GO" id="GO:0005737">
    <property type="term" value="C:cytoplasm"/>
    <property type="evidence" value="ECO:0007669"/>
    <property type="project" value="UniProtKB-SubCell"/>
</dbReference>
<dbReference type="GO" id="GO:0051500">
    <property type="term" value="F:D-tyrosyl-tRNA(Tyr) deacylase activity"/>
    <property type="evidence" value="ECO:0007669"/>
    <property type="project" value="TreeGrafter"/>
</dbReference>
<dbReference type="GO" id="GO:0106026">
    <property type="term" value="F:Gly-tRNA(Ala) deacylase activity"/>
    <property type="evidence" value="ECO:0007669"/>
    <property type="project" value="UniProtKB-UniRule"/>
</dbReference>
<dbReference type="GO" id="GO:0043908">
    <property type="term" value="F:Ser(Gly)-tRNA(Ala) hydrolase activity"/>
    <property type="evidence" value="ECO:0007669"/>
    <property type="project" value="UniProtKB-UniRule"/>
</dbReference>
<dbReference type="GO" id="GO:0000049">
    <property type="term" value="F:tRNA binding"/>
    <property type="evidence" value="ECO:0007669"/>
    <property type="project" value="UniProtKB-UniRule"/>
</dbReference>
<dbReference type="GO" id="GO:0019478">
    <property type="term" value="P:D-amino acid catabolic process"/>
    <property type="evidence" value="ECO:0007669"/>
    <property type="project" value="UniProtKB-UniRule"/>
</dbReference>
<dbReference type="CDD" id="cd00563">
    <property type="entry name" value="Dtyr_deacylase"/>
    <property type="match status" value="1"/>
</dbReference>
<dbReference type="FunFam" id="3.50.80.10:FF:000001">
    <property type="entry name" value="D-aminoacyl-tRNA deacylase"/>
    <property type="match status" value="1"/>
</dbReference>
<dbReference type="Gene3D" id="3.50.80.10">
    <property type="entry name" value="D-tyrosyl-tRNA(Tyr) deacylase"/>
    <property type="match status" value="1"/>
</dbReference>
<dbReference type="HAMAP" id="MF_00518">
    <property type="entry name" value="Deacylase_Dtd"/>
    <property type="match status" value="1"/>
</dbReference>
<dbReference type="InterPro" id="IPR003732">
    <property type="entry name" value="Daa-tRNA_deacyls_DTD"/>
</dbReference>
<dbReference type="InterPro" id="IPR023509">
    <property type="entry name" value="DTD-like_sf"/>
</dbReference>
<dbReference type="NCBIfam" id="TIGR00256">
    <property type="entry name" value="D-aminoacyl-tRNA deacylase"/>
    <property type="match status" value="1"/>
</dbReference>
<dbReference type="PANTHER" id="PTHR10472:SF5">
    <property type="entry name" value="D-AMINOACYL-TRNA DEACYLASE 1"/>
    <property type="match status" value="1"/>
</dbReference>
<dbReference type="PANTHER" id="PTHR10472">
    <property type="entry name" value="D-TYROSYL-TRNA TYR DEACYLASE"/>
    <property type="match status" value="1"/>
</dbReference>
<dbReference type="Pfam" id="PF02580">
    <property type="entry name" value="Tyr_Deacylase"/>
    <property type="match status" value="1"/>
</dbReference>
<dbReference type="SUPFAM" id="SSF69500">
    <property type="entry name" value="DTD-like"/>
    <property type="match status" value="1"/>
</dbReference>
<protein>
    <recommendedName>
        <fullName evidence="1">D-aminoacyl-tRNA deacylase</fullName>
        <shortName evidence="1">DTD</shortName>
        <ecNumber evidence="1">3.1.1.96</ecNumber>
    </recommendedName>
    <alternativeName>
        <fullName evidence="1">Gly-tRNA(Ala) deacylase</fullName>
    </alternativeName>
</protein>
<reference key="1">
    <citation type="submission" date="2008-02" db="EMBL/GenBank/DDBJ databases">
        <title>Complete sequence of Synechococcus sp. PCC 7002.</title>
        <authorList>
            <person name="Li T."/>
            <person name="Zhao J."/>
            <person name="Zhao C."/>
            <person name="Liu Z."/>
            <person name="Zhao F."/>
            <person name="Marquardt J."/>
            <person name="Nomura C.T."/>
            <person name="Persson S."/>
            <person name="Detter J.C."/>
            <person name="Richardson P.M."/>
            <person name="Lanz C."/>
            <person name="Schuster S.C."/>
            <person name="Wang J."/>
            <person name="Li S."/>
            <person name="Huang X."/>
            <person name="Cai T."/>
            <person name="Yu Z."/>
            <person name="Luo J."/>
            <person name="Zhao J."/>
            <person name="Bryant D.A."/>
        </authorList>
    </citation>
    <scope>NUCLEOTIDE SEQUENCE [LARGE SCALE GENOMIC DNA]</scope>
    <source>
        <strain>ATCC 27264 / PCC 7002 / PR-6</strain>
    </source>
</reference>
<evidence type="ECO:0000255" key="1">
    <source>
        <dbReference type="HAMAP-Rule" id="MF_00518"/>
    </source>
</evidence>
<organism>
    <name type="scientific">Picosynechococcus sp. (strain ATCC 27264 / PCC 7002 / PR-6)</name>
    <name type="common">Agmenellum quadruplicatum</name>
    <dbReference type="NCBI Taxonomy" id="32049"/>
    <lineage>
        <taxon>Bacteria</taxon>
        <taxon>Bacillati</taxon>
        <taxon>Cyanobacteriota</taxon>
        <taxon>Cyanophyceae</taxon>
        <taxon>Oscillatoriophycideae</taxon>
        <taxon>Chroococcales</taxon>
        <taxon>Geminocystaceae</taxon>
        <taxon>Picosynechococcus</taxon>
    </lineage>
</organism>
<name>DTD_PICP2</name>
<comment type="function">
    <text evidence="1">An aminoacyl-tRNA editing enzyme that deacylates mischarged D-aminoacyl-tRNAs. Also deacylates mischarged glycyl-tRNA(Ala), protecting cells against glycine mischarging by AlaRS. Acts via tRNA-based rather than protein-based catalysis; rejects L-amino acids rather than detecting D-amino acids in the active site. By recycling D-aminoacyl-tRNA to D-amino acids and free tRNA molecules, this enzyme counteracts the toxicity associated with the formation of D-aminoacyl-tRNA entities in vivo and helps enforce protein L-homochirality.</text>
</comment>
<comment type="catalytic activity">
    <reaction evidence="1">
        <text>glycyl-tRNA(Ala) + H2O = tRNA(Ala) + glycine + H(+)</text>
        <dbReference type="Rhea" id="RHEA:53744"/>
        <dbReference type="Rhea" id="RHEA-COMP:9657"/>
        <dbReference type="Rhea" id="RHEA-COMP:13640"/>
        <dbReference type="ChEBI" id="CHEBI:15377"/>
        <dbReference type="ChEBI" id="CHEBI:15378"/>
        <dbReference type="ChEBI" id="CHEBI:57305"/>
        <dbReference type="ChEBI" id="CHEBI:78442"/>
        <dbReference type="ChEBI" id="CHEBI:78522"/>
        <dbReference type="EC" id="3.1.1.96"/>
    </reaction>
</comment>
<comment type="catalytic activity">
    <reaction evidence="1">
        <text>a D-aminoacyl-tRNA + H2O = a tRNA + a D-alpha-amino acid + H(+)</text>
        <dbReference type="Rhea" id="RHEA:13953"/>
        <dbReference type="Rhea" id="RHEA-COMP:10123"/>
        <dbReference type="Rhea" id="RHEA-COMP:10124"/>
        <dbReference type="ChEBI" id="CHEBI:15377"/>
        <dbReference type="ChEBI" id="CHEBI:15378"/>
        <dbReference type="ChEBI" id="CHEBI:59871"/>
        <dbReference type="ChEBI" id="CHEBI:78442"/>
        <dbReference type="ChEBI" id="CHEBI:79333"/>
        <dbReference type="EC" id="3.1.1.96"/>
    </reaction>
</comment>
<comment type="subunit">
    <text evidence="1">Homodimer.</text>
</comment>
<comment type="subcellular location">
    <subcellularLocation>
        <location evidence="1">Cytoplasm</location>
    </subcellularLocation>
</comment>
<comment type="domain">
    <text evidence="1">A Gly-cisPro motif from one monomer fits into the active site of the other monomer to allow specific chiral rejection of L-amino acids.</text>
</comment>
<comment type="similarity">
    <text evidence="1">Belongs to the DTD family.</text>
</comment>
<keyword id="KW-0963">Cytoplasm</keyword>
<keyword id="KW-0378">Hydrolase</keyword>
<keyword id="KW-1185">Reference proteome</keyword>
<keyword id="KW-0694">RNA-binding</keyword>
<keyword id="KW-0820">tRNA-binding</keyword>
<sequence>MKIVLQRVQQSHVSVNQHIVGQINQGLTLLVGISPTDTDAELQWLARKCLDLRLFPDPEGNPWQASIQDIQGEILVVSQFTLYGDCRKGRRPSFSGSAKPDQAEQIYEKFVAFLRQSGLKIETGQFGAMMQVEISNDGPVTLLLEREAKPA</sequence>
<feature type="chain" id="PRO_1000127585" description="D-aminoacyl-tRNA deacylase">
    <location>
        <begin position="1"/>
        <end position="151"/>
    </location>
</feature>
<feature type="short sequence motif" description="Gly-cisPro motif, important for rejection of L-amino acids" evidence="1">
    <location>
        <begin position="138"/>
        <end position="139"/>
    </location>
</feature>
<gene>
    <name evidence="1" type="primary">dtd</name>
    <name type="ordered locus">SYNPCC7002_A0209</name>
</gene>
<accession>B1XM75</accession>